<feature type="signal peptide" evidence="2">
    <location>
        <begin position="1" status="less than"/>
        <end position="9"/>
    </location>
</feature>
<feature type="propeptide" id="PRO_0000404832" evidence="1">
    <location>
        <begin position="10"/>
        <end position="38"/>
    </location>
</feature>
<feature type="peptide" id="PRO_0000404833" description="Conotoxin TsMEKL-03">
    <location>
        <begin position="39"/>
        <end position="66"/>
    </location>
</feature>
<feature type="disulfide bond" evidence="1">
    <location>
        <begin position="40"/>
        <end position="54"/>
    </location>
</feature>
<feature type="disulfide bond" evidence="1">
    <location>
        <begin position="47"/>
        <end position="58"/>
    </location>
</feature>
<feature type="disulfide bond" evidence="1">
    <location>
        <begin position="53"/>
        <end position="63"/>
    </location>
</feature>
<feature type="non-terminal residue">
    <location>
        <position position="1"/>
    </location>
</feature>
<proteinExistence type="evidence at transcript level"/>
<accession>Q9BPC0</accession>
<comment type="subcellular location">
    <subcellularLocation>
        <location evidence="1">Secreted</location>
    </subcellularLocation>
</comment>
<comment type="tissue specificity">
    <text>Expressed by the venom duct.</text>
</comment>
<comment type="domain">
    <text evidence="1">The presence of a 'disulfide through disulfide knot' structurally defines this protein as a knottin.</text>
</comment>
<comment type="domain">
    <text>The cysteine framework is VI/VII (C-C-CC-C-C).</text>
</comment>
<comment type="similarity">
    <text evidence="3">Belongs to the conotoxin O2 superfamily.</text>
</comment>
<name>O26X_CONTS</name>
<dbReference type="EMBL" id="AF215014">
    <property type="protein sequence ID" value="AAG60442.1"/>
    <property type="molecule type" value="mRNA"/>
</dbReference>
<dbReference type="SMR" id="Q9BPC0"/>
<dbReference type="ConoServer" id="701">
    <property type="toxin name" value="TsMEKL-03 precursor"/>
</dbReference>
<dbReference type="GO" id="GO:0005576">
    <property type="term" value="C:extracellular region"/>
    <property type="evidence" value="ECO:0007669"/>
    <property type="project" value="UniProtKB-SubCell"/>
</dbReference>
<dbReference type="GO" id="GO:0008200">
    <property type="term" value="F:ion channel inhibitor activity"/>
    <property type="evidence" value="ECO:0007669"/>
    <property type="project" value="InterPro"/>
</dbReference>
<dbReference type="GO" id="GO:0090729">
    <property type="term" value="F:toxin activity"/>
    <property type="evidence" value="ECO:0007669"/>
    <property type="project" value="UniProtKB-KW"/>
</dbReference>
<dbReference type="InterPro" id="IPR004214">
    <property type="entry name" value="Conotoxin"/>
</dbReference>
<dbReference type="Pfam" id="PF02950">
    <property type="entry name" value="Conotoxin"/>
    <property type="match status" value="1"/>
</dbReference>
<evidence type="ECO:0000250" key="1"/>
<evidence type="ECO:0000255" key="2"/>
<evidence type="ECO:0000305" key="3"/>
<reference key="1">
    <citation type="journal article" date="2001" name="Mol. Biol. Evol.">
        <title>Mechanisms for evolving hypervariability: the case of conopeptides.</title>
        <authorList>
            <person name="Conticello S.G."/>
            <person name="Gilad Y."/>
            <person name="Avidan N."/>
            <person name="Ben-Asher E."/>
            <person name="Levy Z."/>
            <person name="Fainzilber M."/>
        </authorList>
    </citation>
    <scope>NUCLEOTIDE SEQUENCE [MRNA]</scope>
    <source>
        <tissue>Venom duct</tissue>
    </source>
</reference>
<sequence>VILLMSTQALIQSGVEKRSNKIKALSKRKTTAESWWEGECYGWWTSCSSPEQCCSLNCENIYCRAW</sequence>
<keyword id="KW-1015">Disulfide bond</keyword>
<keyword id="KW-0960">Knottin</keyword>
<keyword id="KW-0528">Neurotoxin</keyword>
<keyword id="KW-0964">Secreted</keyword>
<keyword id="KW-0732">Signal</keyword>
<keyword id="KW-0800">Toxin</keyword>
<organism>
    <name type="scientific">Conus tessulatus</name>
    <name type="common">Tessellate cone</name>
    <dbReference type="NCBI Taxonomy" id="101317"/>
    <lineage>
        <taxon>Eukaryota</taxon>
        <taxon>Metazoa</taxon>
        <taxon>Spiralia</taxon>
        <taxon>Lophotrochozoa</taxon>
        <taxon>Mollusca</taxon>
        <taxon>Gastropoda</taxon>
        <taxon>Caenogastropoda</taxon>
        <taxon>Neogastropoda</taxon>
        <taxon>Conoidea</taxon>
        <taxon>Conidae</taxon>
        <taxon>Conus</taxon>
        <taxon>Tesselliconus</taxon>
    </lineage>
</organism>
<protein>
    <recommendedName>
        <fullName>Conotoxin TsMEKL-03</fullName>
    </recommendedName>
</protein>